<keyword id="KW-0414">Isoprene biosynthesis</keyword>
<keyword id="KW-0456">Lyase</keyword>
<keyword id="KW-0479">Metal-binding</keyword>
<keyword id="KW-1185">Reference proteome</keyword>
<sequence length="159" mass="16928">MRIGHGFDVHAFGGEGPIIIGGVRIPYEKGLLAHSDGDVALHALTDALLGAAALGDIGKLFPDTDPAFKGADSRELLREAWRRIQAKGYILGNVDVTIIAQAPKMLPHIPQMRVFIAEDLGCHMDDVNVKATTTEKLGFTGRGEGITCEAVALLMKAAK</sequence>
<name>ISPF_SALAR</name>
<protein>
    <recommendedName>
        <fullName evidence="1">2-C-methyl-D-erythritol 2,4-cyclodiphosphate synthase</fullName>
        <shortName evidence="1">MECDP-synthase</shortName>
        <shortName evidence="1">MECPP-synthase</shortName>
        <shortName evidence="1">MECPS</shortName>
        <ecNumber evidence="1">4.6.1.12</ecNumber>
    </recommendedName>
</protein>
<accession>A9MF29</accession>
<dbReference type="EC" id="4.6.1.12" evidence="1"/>
<dbReference type="EMBL" id="CP000880">
    <property type="protein sequence ID" value="ABX19981.1"/>
    <property type="molecule type" value="Genomic_DNA"/>
</dbReference>
<dbReference type="SMR" id="A9MF29"/>
<dbReference type="STRING" id="41514.SARI_00027"/>
<dbReference type="KEGG" id="ses:SARI_00027"/>
<dbReference type="HOGENOM" id="CLU_084630_2_0_6"/>
<dbReference type="UniPathway" id="UPA00056">
    <property type="reaction ID" value="UER00095"/>
</dbReference>
<dbReference type="Proteomes" id="UP000002084">
    <property type="component" value="Chromosome"/>
</dbReference>
<dbReference type="GO" id="GO:0008685">
    <property type="term" value="F:2-C-methyl-D-erythritol 2,4-cyclodiphosphate synthase activity"/>
    <property type="evidence" value="ECO:0007669"/>
    <property type="project" value="UniProtKB-UniRule"/>
</dbReference>
<dbReference type="GO" id="GO:0046872">
    <property type="term" value="F:metal ion binding"/>
    <property type="evidence" value="ECO:0007669"/>
    <property type="project" value="UniProtKB-KW"/>
</dbReference>
<dbReference type="GO" id="GO:0019288">
    <property type="term" value="P:isopentenyl diphosphate biosynthetic process, methylerythritol 4-phosphate pathway"/>
    <property type="evidence" value="ECO:0007669"/>
    <property type="project" value="UniProtKB-UniRule"/>
</dbReference>
<dbReference type="GO" id="GO:0016114">
    <property type="term" value="P:terpenoid biosynthetic process"/>
    <property type="evidence" value="ECO:0007669"/>
    <property type="project" value="InterPro"/>
</dbReference>
<dbReference type="CDD" id="cd00554">
    <property type="entry name" value="MECDP_synthase"/>
    <property type="match status" value="1"/>
</dbReference>
<dbReference type="FunFam" id="3.30.1330.50:FF:000001">
    <property type="entry name" value="2-C-methyl-D-erythritol 2,4-cyclodiphosphate synthase"/>
    <property type="match status" value="1"/>
</dbReference>
<dbReference type="Gene3D" id="3.30.1330.50">
    <property type="entry name" value="2-C-methyl-D-erythritol 2,4-cyclodiphosphate synthase"/>
    <property type="match status" value="1"/>
</dbReference>
<dbReference type="HAMAP" id="MF_00107">
    <property type="entry name" value="IspF"/>
    <property type="match status" value="1"/>
</dbReference>
<dbReference type="InterPro" id="IPR003526">
    <property type="entry name" value="MECDP_synthase"/>
</dbReference>
<dbReference type="InterPro" id="IPR020555">
    <property type="entry name" value="MECDP_synthase_CS"/>
</dbReference>
<dbReference type="InterPro" id="IPR036571">
    <property type="entry name" value="MECDP_synthase_sf"/>
</dbReference>
<dbReference type="NCBIfam" id="TIGR00151">
    <property type="entry name" value="ispF"/>
    <property type="match status" value="1"/>
</dbReference>
<dbReference type="PANTHER" id="PTHR43181">
    <property type="entry name" value="2-C-METHYL-D-ERYTHRITOL 2,4-CYCLODIPHOSPHATE SYNTHASE, CHLOROPLASTIC"/>
    <property type="match status" value="1"/>
</dbReference>
<dbReference type="PANTHER" id="PTHR43181:SF1">
    <property type="entry name" value="2-C-METHYL-D-ERYTHRITOL 2,4-CYCLODIPHOSPHATE SYNTHASE, CHLOROPLASTIC"/>
    <property type="match status" value="1"/>
</dbReference>
<dbReference type="Pfam" id="PF02542">
    <property type="entry name" value="YgbB"/>
    <property type="match status" value="1"/>
</dbReference>
<dbReference type="SUPFAM" id="SSF69765">
    <property type="entry name" value="IpsF-like"/>
    <property type="match status" value="1"/>
</dbReference>
<dbReference type="PROSITE" id="PS01350">
    <property type="entry name" value="ISPF"/>
    <property type="match status" value="1"/>
</dbReference>
<feature type="chain" id="PRO_1000075919" description="2-C-methyl-D-erythritol 2,4-cyclodiphosphate synthase">
    <location>
        <begin position="1"/>
        <end position="159"/>
    </location>
</feature>
<feature type="binding site" evidence="1">
    <location>
        <begin position="8"/>
        <end position="10"/>
    </location>
    <ligand>
        <name>4-CDP-2-C-methyl-D-erythritol 2-phosphate</name>
        <dbReference type="ChEBI" id="CHEBI:57919"/>
    </ligand>
</feature>
<feature type="binding site" evidence="1">
    <location>
        <position position="8"/>
    </location>
    <ligand>
        <name>a divalent metal cation</name>
        <dbReference type="ChEBI" id="CHEBI:60240"/>
    </ligand>
</feature>
<feature type="binding site" evidence="1">
    <location>
        <position position="10"/>
    </location>
    <ligand>
        <name>a divalent metal cation</name>
        <dbReference type="ChEBI" id="CHEBI:60240"/>
    </ligand>
</feature>
<feature type="binding site" evidence="1">
    <location>
        <begin position="34"/>
        <end position="35"/>
    </location>
    <ligand>
        <name>4-CDP-2-C-methyl-D-erythritol 2-phosphate</name>
        <dbReference type="ChEBI" id="CHEBI:57919"/>
    </ligand>
</feature>
<feature type="binding site" evidence="1">
    <location>
        <position position="42"/>
    </location>
    <ligand>
        <name>a divalent metal cation</name>
        <dbReference type="ChEBI" id="CHEBI:60240"/>
    </ligand>
</feature>
<feature type="binding site" evidence="1">
    <location>
        <begin position="56"/>
        <end position="58"/>
    </location>
    <ligand>
        <name>4-CDP-2-C-methyl-D-erythritol 2-phosphate</name>
        <dbReference type="ChEBI" id="CHEBI:57919"/>
    </ligand>
</feature>
<feature type="binding site" evidence="1">
    <location>
        <begin position="61"/>
        <end position="65"/>
    </location>
    <ligand>
        <name>4-CDP-2-C-methyl-D-erythritol 2-phosphate</name>
        <dbReference type="ChEBI" id="CHEBI:57919"/>
    </ligand>
</feature>
<feature type="binding site" evidence="1">
    <location>
        <begin position="100"/>
        <end position="106"/>
    </location>
    <ligand>
        <name>4-CDP-2-C-methyl-D-erythritol 2-phosphate</name>
        <dbReference type="ChEBI" id="CHEBI:57919"/>
    </ligand>
</feature>
<feature type="binding site" evidence="1">
    <location>
        <begin position="132"/>
        <end position="135"/>
    </location>
    <ligand>
        <name>4-CDP-2-C-methyl-D-erythritol 2-phosphate</name>
        <dbReference type="ChEBI" id="CHEBI:57919"/>
    </ligand>
</feature>
<feature type="binding site" evidence="1">
    <location>
        <position position="139"/>
    </location>
    <ligand>
        <name>4-CDP-2-C-methyl-D-erythritol 2-phosphate</name>
        <dbReference type="ChEBI" id="CHEBI:57919"/>
    </ligand>
</feature>
<feature type="binding site" evidence="1">
    <location>
        <position position="142"/>
    </location>
    <ligand>
        <name>4-CDP-2-C-methyl-D-erythritol 2-phosphate</name>
        <dbReference type="ChEBI" id="CHEBI:57919"/>
    </ligand>
</feature>
<feature type="site" description="Transition state stabilizer" evidence="1">
    <location>
        <position position="34"/>
    </location>
</feature>
<feature type="site" description="Transition state stabilizer" evidence="1">
    <location>
        <position position="133"/>
    </location>
</feature>
<reference key="1">
    <citation type="submission" date="2007-11" db="EMBL/GenBank/DDBJ databases">
        <authorList>
            <consortium name="The Salmonella enterica serovar Arizonae Genome Sequencing Project"/>
            <person name="McClelland M."/>
            <person name="Sanderson E.K."/>
            <person name="Porwollik S."/>
            <person name="Spieth J."/>
            <person name="Clifton W.S."/>
            <person name="Fulton R."/>
            <person name="Chunyan W."/>
            <person name="Wollam A."/>
            <person name="Shah N."/>
            <person name="Pepin K."/>
            <person name="Bhonagiri V."/>
            <person name="Nash W."/>
            <person name="Johnson M."/>
            <person name="Thiruvilangam P."/>
            <person name="Wilson R."/>
        </authorList>
    </citation>
    <scope>NUCLEOTIDE SEQUENCE [LARGE SCALE GENOMIC DNA]</scope>
    <source>
        <strain>ATCC BAA-731 / CDC346-86 / RSK2980</strain>
    </source>
</reference>
<gene>
    <name evidence="1" type="primary">ispF</name>
    <name type="ordered locus">SARI_00027</name>
</gene>
<proteinExistence type="inferred from homology"/>
<comment type="function">
    <text evidence="1">Involved in the biosynthesis of isopentenyl diphosphate (IPP) and dimethylallyl diphosphate (DMAPP), two major building blocks of isoprenoid compounds. Catalyzes the conversion of 4-diphosphocytidyl-2-C-methyl-D-erythritol 2-phosphate (CDP-ME2P) to 2-C-methyl-D-erythritol 2,4-cyclodiphosphate (ME-CPP) with a corresponding release of cytidine 5-monophosphate (CMP).</text>
</comment>
<comment type="catalytic activity">
    <reaction evidence="1">
        <text>4-CDP-2-C-methyl-D-erythritol 2-phosphate = 2-C-methyl-D-erythritol 2,4-cyclic diphosphate + CMP</text>
        <dbReference type="Rhea" id="RHEA:23864"/>
        <dbReference type="ChEBI" id="CHEBI:57919"/>
        <dbReference type="ChEBI" id="CHEBI:58483"/>
        <dbReference type="ChEBI" id="CHEBI:60377"/>
        <dbReference type="EC" id="4.6.1.12"/>
    </reaction>
</comment>
<comment type="cofactor">
    <cofactor evidence="1">
        <name>a divalent metal cation</name>
        <dbReference type="ChEBI" id="CHEBI:60240"/>
    </cofactor>
    <text evidence="1">Binds 1 divalent metal cation per subunit.</text>
</comment>
<comment type="pathway">
    <text evidence="1">Isoprenoid biosynthesis; isopentenyl diphosphate biosynthesis via DXP pathway; isopentenyl diphosphate from 1-deoxy-D-xylulose 5-phosphate: step 4/6.</text>
</comment>
<comment type="subunit">
    <text evidence="1">Homotrimer.</text>
</comment>
<comment type="similarity">
    <text evidence="1">Belongs to the IspF family.</text>
</comment>
<evidence type="ECO:0000255" key="1">
    <source>
        <dbReference type="HAMAP-Rule" id="MF_00107"/>
    </source>
</evidence>
<organism>
    <name type="scientific">Salmonella arizonae (strain ATCC BAA-731 / CDC346-86 / RSK2980)</name>
    <dbReference type="NCBI Taxonomy" id="41514"/>
    <lineage>
        <taxon>Bacteria</taxon>
        <taxon>Pseudomonadati</taxon>
        <taxon>Pseudomonadota</taxon>
        <taxon>Gammaproteobacteria</taxon>
        <taxon>Enterobacterales</taxon>
        <taxon>Enterobacteriaceae</taxon>
        <taxon>Salmonella</taxon>
    </lineage>
</organism>